<name>PHCB_ANASL</name>
<accession>P83153</accession>
<comment type="function">
    <text evidence="6">Light-harvesting photosynthetic bile pigment-protein from the phycobiliprotein complex (phycobilisome, PBS). Phycocyanin is the major phycobiliprotein in the PBS rod.</text>
</comment>
<comment type="subunit">
    <text evidence="1">Heterodimer of an alpha and a beta subunit, which further assembles into trimers and the trimers into hexamers.</text>
</comment>
<comment type="subcellular location">
    <subcellularLocation>
        <location evidence="3">Cellular thylakoid membrane</location>
        <topology evidence="3">Peripheral membrane protein</topology>
        <orientation evidence="3">Cytoplasmic side</orientation>
    </subcellularLocation>
    <text evidence="3">Part of the phycobilisome rod.</text>
</comment>
<comment type="PTM">
    <text evidence="1">Contains two covalently linked bilin chromophores.</text>
</comment>
<comment type="similarity">
    <text evidence="4">Belongs to the phycobiliprotein family.</text>
</comment>
<protein>
    <recommendedName>
        <fullName>C-phycocyanin beta subunit</fullName>
    </recommendedName>
</protein>
<evidence type="ECO:0000250" key="1">
    <source>
        <dbReference type="UniProtKB" id="P06539"/>
    </source>
</evidence>
<evidence type="ECO:0000250" key="2">
    <source>
        <dbReference type="UniProtKB" id="P07120"/>
    </source>
</evidence>
<evidence type="ECO:0000250" key="3">
    <source>
        <dbReference type="UniProtKB" id="P84341"/>
    </source>
</evidence>
<evidence type="ECO:0000255" key="4"/>
<evidence type="ECO:0000269" key="5">
    <source ref="1"/>
</evidence>
<evidence type="ECO:0000305" key="6"/>
<proteinExistence type="evidence at protein level"/>
<gene>
    <name evidence="2" type="primary">cpcB</name>
</gene>
<feature type="initiator methionine" description="Removed" evidence="5">
    <location>
        <position position="1"/>
    </location>
</feature>
<feature type="chain" id="PRO_0000262933" description="C-phycocyanin beta subunit">
    <location>
        <begin position="2"/>
        <end position="17" status="greater than"/>
    </location>
</feature>
<feature type="non-terminal residue">
    <location>
        <position position="17"/>
    </location>
</feature>
<dbReference type="GO" id="GO:0030089">
    <property type="term" value="C:phycobilisome"/>
    <property type="evidence" value="ECO:0007669"/>
    <property type="project" value="UniProtKB-KW"/>
</dbReference>
<dbReference type="GO" id="GO:0031676">
    <property type="term" value="C:plasma membrane-derived thylakoid membrane"/>
    <property type="evidence" value="ECO:0007669"/>
    <property type="project" value="UniProtKB-SubCell"/>
</dbReference>
<dbReference type="GO" id="GO:0015979">
    <property type="term" value="P:photosynthesis"/>
    <property type="evidence" value="ECO:0007669"/>
    <property type="project" value="UniProtKB-KW"/>
</dbReference>
<reference evidence="6" key="1">
    <citation type="submission" date="2001-10" db="UniProtKB">
        <authorList>
            <person name="Apte S.K."/>
            <person name="Uhlemann E."/>
            <person name="Schmid R."/>
            <person name="Altendorf K."/>
        </authorList>
    </citation>
    <scope>PROTEIN SEQUENCE OF 2-17</scope>
</reference>
<organism>
    <name type="scientific">Anabaena sp. (strain L31)</name>
    <dbReference type="NCBI Taxonomy" id="29412"/>
    <lineage>
        <taxon>Bacteria</taxon>
        <taxon>Bacillati</taxon>
        <taxon>Cyanobacteriota</taxon>
        <taxon>Cyanophyceae</taxon>
        <taxon>Nostocales</taxon>
        <taxon>Nostocaceae</taxon>
        <taxon>Anabaena</taxon>
    </lineage>
</organism>
<sequence length="17" mass="1854">MTLDVFTKVVSQADSRG</sequence>
<keyword id="KW-0042">Antenna complex</keyword>
<keyword id="KW-0089">Bile pigment</keyword>
<keyword id="KW-0157">Chromophore</keyword>
<keyword id="KW-0903">Direct protein sequencing</keyword>
<keyword id="KW-0249">Electron transport</keyword>
<keyword id="KW-0472">Membrane</keyword>
<keyword id="KW-0602">Photosynthesis</keyword>
<keyword id="KW-0605">Phycobilisome</keyword>
<keyword id="KW-0793">Thylakoid</keyword>
<keyword id="KW-0813">Transport</keyword>